<gene>
    <name type="primary">ND3</name>
    <name type="synonym">NAD3</name>
</gene>
<keyword id="KW-0249">Electron transport</keyword>
<keyword id="KW-0472">Membrane</keyword>
<keyword id="KW-0496">Mitochondrion</keyword>
<keyword id="KW-0520">NAD</keyword>
<keyword id="KW-0679">Respiratory chain</keyword>
<keyword id="KW-1278">Translocase</keyword>
<keyword id="KW-0812">Transmembrane</keyword>
<keyword id="KW-1133">Transmembrane helix</keyword>
<keyword id="KW-0813">Transport</keyword>
<keyword id="KW-0830">Ubiquinone</keyword>
<protein>
    <recommendedName>
        <fullName>NADH-ubiquinone oxidoreductase chain 3</fullName>
        <ecNumber>7.1.1.2</ecNumber>
    </recommendedName>
    <alternativeName>
        <fullName>NADH dehydrogenase subunit 3</fullName>
    </alternativeName>
</protein>
<dbReference type="EC" id="7.1.1.2"/>
<dbReference type="EMBL" id="M74169">
    <property type="protein sequence ID" value="AAB01588.1"/>
    <property type="molecule type" value="Genomic_DNA"/>
</dbReference>
<dbReference type="SMR" id="P27062"/>
<dbReference type="GO" id="GO:0031966">
    <property type="term" value="C:mitochondrial membrane"/>
    <property type="evidence" value="ECO:0007669"/>
    <property type="project" value="UniProtKB-SubCell"/>
</dbReference>
<dbReference type="GO" id="GO:0030964">
    <property type="term" value="C:NADH dehydrogenase complex"/>
    <property type="evidence" value="ECO:0007669"/>
    <property type="project" value="TreeGrafter"/>
</dbReference>
<dbReference type="GO" id="GO:0008137">
    <property type="term" value="F:NADH dehydrogenase (ubiquinone) activity"/>
    <property type="evidence" value="ECO:0007669"/>
    <property type="project" value="UniProtKB-EC"/>
</dbReference>
<dbReference type="FunFam" id="1.20.58.1610:FF:000006">
    <property type="entry name" value="NADH-ubiquinone oxidoreductase chain 3"/>
    <property type="match status" value="1"/>
</dbReference>
<dbReference type="Gene3D" id="1.20.58.1610">
    <property type="entry name" value="NADH:ubiquinone/plastoquinone oxidoreductase, chain 3"/>
    <property type="match status" value="1"/>
</dbReference>
<dbReference type="InterPro" id="IPR000440">
    <property type="entry name" value="NADH_UbQ/plastoQ_OxRdtase_su3"/>
</dbReference>
<dbReference type="InterPro" id="IPR038430">
    <property type="entry name" value="NDAH_ubi_oxred_su3_sf"/>
</dbReference>
<dbReference type="PANTHER" id="PTHR11058">
    <property type="entry name" value="NADH-UBIQUINONE OXIDOREDUCTASE CHAIN 3"/>
    <property type="match status" value="1"/>
</dbReference>
<dbReference type="PANTHER" id="PTHR11058:SF9">
    <property type="entry name" value="NADH-UBIQUINONE OXIDOREDUCTASE CHAIN 3"/>
    <property type="match status" value="1"/>
</dbReference>
<dbReference type="Pfam" id="PF00507">
    <property type="entry name" value="Oxidored_q4"/>
    <property type="match status" value="1"/>
</dbReference>
<evidence type="ECO:0000250" key="1"/>
<evidence type="ECO:0000255" key="2"/>
<evidence type="ECO:0000305" key="3"/>
<comment type="function">
    <text evidence="1">Core subunit of the mitochondrial membrane respiratory chain NADH dehydrogenase (Complex I) that is believed to belong to the minimal assembly required for catalysis. Complex I functions in the transfer of electrons from NADH to the respiratory chain. The immediate electron acceptor for the enzyme is believed to be ubiquinone (By similarity).</text>
</comment>
<comment type="catalytic activity">
    <reaction>
        <text>a ubiquinone + NADH + 5 H(+)(in) = a ubiquinol + NAD(+) + 4 H(+)(out)</text>
        <dbReference type="Rhea" id="RHEA:29091"/>
        <dbReference type="Rhea" id="RHEA-COMP:9565"/>
        <dbReference type="Rhea" id="RHEA-COMP:9566"/>
        <dbReference type="ChEBI" id="CHEBI:15378"/>
        <dbReference type="ChEBI" id="CHEBI:16389"/>
        <dbReference type="ChEBI" id="CHEBI:17976"/>
        <dbReference type="ChEBI" id="CHEBI:57540"/>
        <dbReference type="ChEBI" id="CHEBI:57945"/>
        <dbReference type="EC" id="7.1.1.2"/>
    </reaction>
</comment>
<comment type="subcellular location">
    <subcellularLocation>
        <location evidence="1">Mitochondrion membrane</location>
        <topology evidence="1">Multi-pass membrane protein</topology>
    </subcellularLocation>
</comment>
<comment type="similarity">
    <text evidence="3">Belongs to the complex I subunit 3 family.</text>
</comment>
<feature type="chain" id="PRO_0000117786" description="NADH-ubiquinone oxidoreductase chain 3">
    <location>
        <begin position="1"/>
        <end position="118"/>
    </location>
</feature>
<feature type="transmembrane region" description="Helical" evidence="2">
    <location>
        <begin position="4"/>
        <end position="24"/>
    </location>
</feature>
<feature type="transmembrane region" description="Helical" evidence="2">
    <location>
        <begin position="87"/>
        <end position="107"/>
    </location>
</feature>
<reference key="1">
    <citation type="journal article" date="1991" name="Plant Physiol.">
        <title>Korean ginseng mitochondrial DNA encodes an intact rps12 gene downstream of the nad3 gene.</title>
        <authorList>
            <person name="Kim K.-S."/>
            <person name="Schuster W."/>
            <person name="Brennicke A."/>
            <person name="Choi K.-T."/>
        </authorList>
    </citation>
    <scope>NUCLEOTIDE SEQUENCE [GENOMIC DNA]</scope>
    <source>
        <tissue>Root</tissue>
    </source>
</reference>
<geneLocation type="mitochondrion"/>
<proteinExistence type="inferred from homology"/>
<name>NU3M_PANGI</name>
<organism>
    <name type="scientific">Panax ginseng</name>
    <name type="common">Korean ginseng</name>
    <dbReference type="NCBI Taxonomy" id="4054"/>
    <lineage>
        <taxon>Eukaryota</taxon>
        <taxon>Viridiplantae</taxon>
        <taxon>Streptophyta</taxon>
        <taxon>Embryophyta</taxon>
        <taxon>Tracheophyta</taxon>
        <taxon>Spermatophyta</taxon>
        <taxon>Magnoliopsida</taxon>
        <taxon>eudicotyledons</taxon>
        <taxon>Gunneridae</taxon>
        <taxon>Pentapetalae</taxon>
        <taxon>asterids</taxon>
        <taxon>campanulids</taxon>
        <taxon>Apiales</taxon>
        <taxon>Araliaceae</taxon>
        <taxon>Panax</taxon>
    </lineage>
</organism>
<sequence>MSEFAPICIYLVISLLVSLIPLGVPFPFASNSSTYPDKLSAYECGFDPSGDARSRFDIRFYLVSILFIIPDPEVTFSFPWAVPPNKIDPFGSWSMMAFLLILTIGSLYEWKRGASDRE</sequence>
<accession>P27062</accession>